<proteinExistence type="inferred from homology"/>
<keyword id="KW-0997">Cell inner membrane</keyword>
<keyword id="KW-1003">Cell membrane</keyword>
<keyword id="KW-0472">Membrane</keyword>
<organism>
    <name type="scientific">Phocaeicola vulgatus (strain ATCC 8482 / DSM 1447 / JCM 5826 / CCUG 4940 / NBRC 14291 / NCTC 11154)</name>
    <name type="common">Bacteroides vulgatus</name>
    <dbReference type="NCBI Taxonomy" id="435590"/>
    <lineage>
        <taxon>Bacteria</taxon>
        <taxon>Pseudomonadati</taxon>
        <taxon>Bacteroidota</taxon>
        <taxon>Bacteroidia</taxon>
        <taxon>Bacteroidales</taxon>
        <taxon>Bacteroidaceae</taxon>
        <taxon>Phocaeicola</taxon>
    </lineage>
</organism>
<protein>
    <recommendedName>
        <fullName evidence="1">Putative membrane protein insertion efficiency factor</fullName>
    </recommendedName>
</protein>
<reference key="1">
    <citation type="journal article" date="2007" name="PLoS Biol.">
        <title>Evolution of symbiotic bacteria in the distal human intestine.</title>
        <authorList>
            <person name="Xu J."/>
            <person name="Mahowald M.A."/>
            <person name="Ley R.E."/>
            <person name="Lozupone C.A."/>
            <person name="Hamady M."/>
            <person name="Martens E.C."/>
            <person name="Henrissat B."/>
            <person name="Coutinho P.M."/>
            <person name="Minx P."/>
            <person name="Latreille P."/>
            <person name="Cordum H."/>
            <person name="Van Brunt A."/>
            <person name="Kim K."/>
            <person name="Fulton R.S."/>
            <person name="Fulton L.A."/>
            <person name="Clifton S.W."/>
            <person name="Wilson R.K."/>
            <person name="Knight R.D."/>
            <person name="Gordon J.I."/>
        </authorList>
    </citation>
    <scope>NUCLEOTIDE SEQUENCE [LARGE SCALE GENOMIC DNA]</scope>
    <source>
        <strain>ATCC 8482 / DSM 1447 / JCM 5826 / CCUG 4940 / NBRC 14291 / NCTC 11154</strain>
    </source>
</reference>
<name>YIDD_PHOV8</name>
<dbReference type="EMBL" id="CP000139">
    <property type="protein sequence ID" value="ABR38880.1"/>
    <property type="molecule type" value="Genomic_DNA"/>
</dbReference>
<dbReference type="STRING" id="435590.BVU_1189"/>
<dbReference type="PaxDb" id="435590-BVU_1189"/>
<dbReference type="GeneID" id="5302155"/>
<dbReference type="KEGG" id="bvu:BVU_1189"/>
<dbReference type="eggNOG" id="COG0759">
    <property type="taxonomic scope" value="Bacteria"/>
</dbReference>
<dbReference type="HOGENOM" id="CLU_144811_6_1_10"/>
<dbReference type="BioCyc" id="BVUL435590:G1G59-1236-MONOMER"/>
<dbReference type="Proteomes" id="UP000002861">
    <property type="component" value="Chromosome"/>
</dbReference>
<dbReference type="GO" id="GO:0005886">
    <property type="term" value="C:plasma membrane"/>
    <property type="evidence" value="ECO:0007669"/>
    <property type="project" value="UniProtKB-SubCell"/>
</dbReference>
<dbReference type="HAMAP" id="MF_00386">
    <property type="entry name" value="UPF0161_YidD"/>
    <property type="match status" value="1"/>
</dbReference>
<dbReference type="InterPro" id="IPR002696">
    <property type="entry name" value="Membr_insert_effic_factor_YidD"/>
</dbReference>
<dbReference type="NCBIfam" id="TIGR00278">
    <property type="entry name" value="membrane protein insertion efficiency factor YidD"/>
    <property type="match status" value="1"/>
</dbReference>
<dbReference type="PANTHER" id="PTHR33383">
    <property type="entry name" value="MEMBRANE PROTEIN INSERTION EFFICIENCY FACTOR-RELATED"/>
    <property type="match status" value="1"/>
</dbReference>
<dbReference type="PANTHER" id="PTHR33383:SF1">
    <property type="entry name" value="MEMBRANE PROTEIN INSERTION EFFICIENCY FACTOR-RELATED"/>
    <property type="match status" value="1"/>
</dbReference>
<dbReference type="Pfam" id="PF01809">
    <property type="entry name" value="YidD"/>
    <property type="match status" value="1"/>
</dbReference>
<dbReference type="SMART" id="SM01234">
    <property type="entry name" value="Haemolytic"/>
    <property type="match status" value="1"/>
</dbReference>
<evidence type="ECO:0000255" key="1">
    <source>
        <dbReference type="HAMAP-Rule" id="MF_00386"/>
    </source>
</evidence>
<sequence length="73" mass="8364">MKKILSYLLLLPVYFYRGYISPMTPPSCRFVPTCSEYAIEAIKKHGPFKGLYLAVRRILRCHPWGGSGYDPVP</sequence>
<comment type="function">
    <text evidence="1">Could be involved in insertion of integral membrane proteins into the membrane.</text>
</comment>
<comment type="subcellular location">
    <subcellularLocation>
        <location evidence="1">Cell inner membrane</location>
        <topology evidence="1">Peripheral membrane protein</topology>
        <orientation evidence="1">Cytoplasmic side</orientation>
    </subcellularLocation>
</comment>
<comment type="similarity">
    <text evidence="1">Belongs to the UPF0161 family.</text>
</comment>
<accession>A6KZL6</accession>
<gene>
    <name type="ordered locus">BVU_1189</name>
</gene>
<feature type="chain" id="PRO_1000013064" description="Putative membrane protein insertion efficiency factor">
    <location>
        <begin position="1"/>
        <end position="73"/>
    </location>
</feature>